<proteinExistence type="inferred from homology"/>
<feature type="chain" id="PRO_1000129239" description="Succinate--CoA ligase [ADP-forming] subunit beta">
    <location>
        <begin position="1"/>
        <end position="389"/>
    </location>
</feature>
<feature type="domain" description="ATP-grasp" evidence="1">
    <location>
        <begin position="9"/>
        <end position="244"/>
    </location>
</feature>
<feature type="binding site" evidence="1">
    <location>
        <position position="46"/>
    </location>
    <ligand>
        <name>ATP</name>
        <dbReference type="ChEBI" id="CHEBI:30616"/>
    </ligand>
</feature>
<feature type="binding site" evidence="1">
    <location>
        <begin position="53"/>
        <end position="55"/>
    </location>
    <ligand>
        <name>ATP</name>
        <dbReference type="ChEBI" id="CHEBI:30616"/>
    </ligand>
</feature>
<feature type="binding site" evidence="1">
    <location>
        <position position="102"/>
    </location>
    <ligand>
        <name>ATP</name>
        <dbReference type="ChEBI" id="CHEBI:30616"/>
    </ligand>
</feature>
<feature type="binding site" evidence="1">
    <location>
        <position position="107"/>
    </location>
    <ligand>
        <name>ATP</name>
        <dbReference type="ChEBI" id="CHEBI:30616"/>
    </ligand>
</feature>
<feature type="binding site" evidence="1">
    <location>
        <position position="199"/>
    </location>
    <ligand>
        <name>Mg(2+)</name>
        <dbReference type="ChEBI" id="CHEBI:18420"/>
    </ligand>
</feature>
<feature type="binding site" evidence="1">
    <location>
        <position position="213"/>
    </location>
    <ligand>
        <name>Mg(2+)</name>
        <dbReference type="ChEBI" id="CHEBI:18420"/>
    </ligand>
</feature>
<feature type="binding site" evidence="1">
    <location>
        <position position="264"/>
    </location>
    <ligand>
        <name>substrate</name>
        <note>ligand shared with subunit alpha</note>
    </ligand>
</feature>
<feature type="binding site" evidence="1">
    <location>
        <begin position="321"/>
        <end position="323"/>
    </location>
    <ligand>
        <name>substrate</name>
        <note>ligand shared with subunit alpha</note>
    </ligand>
</feature>
<accession>B2ST87</accession>
<sequence>MNFHEYQSKQLLAEYGIPVPSGKVAATPDEAVDVATSLGKGPWMVKAQIHAGGRGKAGGVKFCKTTDDVKAAAAKMLGTKMSTYQTAGVELPINLVLVTTAGEIVKELYLSILVDRGTKTITYIASSEGGVEIEQVAAETPELIHALNVDFVEGVQGYHGRDFGFKLGLNAKQAGQFASIMVNLYKLFNEKDLALVEINPLAILDDGNLYALDGKFDSDDNAAFRQKQLVAMRDKTQEDETEVTASELDINYVTMDGNIGCMVNGAGLAMATMDVIKLNGGEPANFLDVGGGANKQRVIEAFKLILSSDKVEGIFVNIFGGIVRCDMIAEGIIAAVKEVGVKVPVVVRLEGTNVEEGKQLLRDSGMAIIPADNINDGAKKVVEAVKNAA</sequence>
<gene>
    <name evidence="1" type="primary">sucC</name>
    <name type="ordered locus">PXO_04879</name>
</gene>
<comment type="function">
    <text evidence="1">Succinyl-CoA synthetase functions in the citric acid cycle (TCA), coupling the hydrolysis of succinyl-CoA to the synthesis of either ATP or GTP and thus represents the only step of substrate-level phosphorylation in the TCA. The beta subunit provides nucleotide specificity of the enzyme and binds the substrate succinate, while the binding sites for coenzyme A and phosphate are found in the alpha subunit.</text>
</comment>
<comment type="catalytic activity">
    <reaction evidence="1">
        <text>succinate + ATP + CoA = succinyl-CoA + ADP + phosphate</text>
        <dbReference type="Rhea" id="RHEA:17661"/>
        <dbReference type="ChEBI" id="CHEBI:30031"/>
        <dbReference type="ChEBI" id="CHEBI:30616"/>
        <dbReference type="ChEBI" id="CHEBI:43474"/>
        <dbReference type="ChEBI" id="CHEBI:57287"/>
        <dbReference type="ChEBI" id="CHEBI:57292"/>
        <dbReference type="ChEBI" id="CHEBI:456216"/>
        <dbReference type="EC" id="6.2.1.5"/>
    </reaction>
    <physiologicalReaction direction="right-to-left" evidence="1">
        <dbReference type="Rhea" id="RHEA:17663"/>
    </physiologicalReaction>
</comment>
<comment type="catalytic activity">
    <reaction evidence="1">
        <text>GTP + succinate + CoA = succinyl-CoA + GDP + phosphate</text>
        <dbReference type="Rhea" id="RHEA:22120"/>
        <dbReference type="ChEBI" id="CHEBI:30031"/>
        <dbReference type="ChEBI" id="CHEBI:37565"/>
        <dbReference type="ChEBI" id="CHEBI:43474"/>
        <dbReference type="ChEBI" id="CHEBI:57287"/>
        <dbReference type="ChEBI" id="CHEBI:57292"/>
        <dbReference type="ChEBI" id="CHEBI:58189"/>
    </reaction>
    <physiologicalReaction direction="right-to-left" evidence="1">
        <dbReference type="Rhea" id="RHEA:22122"/>
    </physiologicalReaction>
</comment>
<comment type="cofactor">
    <cofactor evidence="1">
        <name>Mg(2+)</name>
        <dbReference type="ChEBI" id="CHEBI:18420"/>
    </cofactor>
    <text evidence="1">Binds 1 Mg(2+) ion per subunit.</text>
</comment>
<comment type="pathway">
    <text evidence="1">Carbohydrate metabolism; tricarboxylic acid cycle; succinate from succinyl-CoA (ligase route): step 1/1.</text>
</comment>
<comment type="subunit">
    <text evidence="1">Heterotetramer of two alpha and two beta subunits.</text>
</comment>
<comment type="similarity">
    <text evidence="1">Belongs to the succinate/malate CoA ligase beta subunit family.</text>
</comment>
<dbReference type="EC" id="6.2.1.5" evidence="1"/>
<dbReference type="EMBL" id="CP000967">
    <property type="protein sequence ID" value="ACD58132.1"/>
    <property type="molecule type" value="Genomic_DNA"/>
</dbReference>
<dbReference type="RefSeq" id="WP_011258367.1">
    <property type="nucleotide sequence ID" value="NC_010717.2"/>
</dbReference>
<dbReference type="SMR" id="B2ST87"/>
<dbReference type="KEGG" id="xop:PXO_04879"/>
<dbReference type="eggNOG" id="COG0045">
    <property type="taxonomic scope" value="Bacteria"/>
</dbReference>
<dbReference type="HOGENOM" id="CLU_037430_0_2_6"/>
<dbReference type="UniPathway" id="UPA00223">
    <property type="reaction ID" value="UER00999"/>
</dbReference>
<dbReference type="Proteomes" id="UP000001740">
    <property type="component" value="Chromosome"/>
</dbReference>
<dbReference type="GO" id="GO:0042709">
    <property type="term" value="C:succinate-CoA ligase complex"/>
    <property type="evidence" value="ECO:0007669"/>
    <property type="project" value="TreeGrafter"/>
</dbReference>
<dbReference type="GO" id="GO:0005524">
    <property type="term" value="F:ATP binding"/>
    <property type="evidence" value="ECO:0007669"/>
    <property type="project" value="UniProtKB-UniRule"/>
</dbReference>
<dbReference type="GO" id="GO:0000287">
    <property type="term" value="F:magnesium ion binding"/>
    <property type="evidence" value="ECO:0007669"/>
    <property type="project" value="UniProtKB-UniRule"/>
</dbReference>
<dbReference type="GO" id="GO:0004775">
    <property type="term" value="F:succinate-CoA ligase (ADP-forming) activity"/>
    <property type="evidence" value="ECO:0007669"/>
    <property type="project" value="UniProtKB-UniRule"/>
</dbReference>
<dbReference type="GO" id="GO:0004776">
    <property type="term" value="F:succinate-CoA ligase (GDP-forming) activity"/>
    <property type="evidence" value="ECO:0007669"/>
    <property type="project" value="RHEA"/>
</dbReference>
<dbReference type="GO" id="GO:0006104">
    <property type="term" value="P:succinyl-CoA metabolic process"/>
    <property type="evidence" value="ECO:0007669"/>
    <property type="project" value="TreeGrafter"/>
</dbReference>
<dbReference type="GO" id="GO:0006099">
    <property type="term" value="P:tricarboxylic acid cycle"/>
    <property type="evidence" value="ECO:0007669"/>
    <property type="project" value="UniProtKB-UniRule"/>
</dbReference>
<dbReference type="FunFam" id="3.30.1490.20:FF:000002">
    <property type="entry name" value="Succinate--CoA ligase [ADP-forming] subunit beta"/>
    <property type="match status" value="1"/>
</dbReference>
<dbReference type="FunFam" id="3.30.470.20:FF:000002">
    <property type="entry name" value="Succinate--CoA ligase [ADP-forming] subunit beta"/>
    <property type="match status" value="1"/>
</dbReference>
<dbReference type="FunFam" id="3.40.50.261:FF:000001">
    <property type="entry name" value="Succinate--CoA ligase [ADP-forming] subunit beta"/>
    <property type="match status" value="1"/>
</dbReference>
<dbReference type="Gene3D" id="3.30.1490.20">
    <property type="entry name" value="ATP-grasp fold, A domain"/>
    <property type="match status" value="1"/>
</dbReference>
<dbReference type="Gene3D" id="3.30.470.20">
    <property type="entry name" value="ATP-grasp fold, B domain"/>
    <property type="match status" value="1"/>
</dbReference>
<dbReference type="Gene3D" id="3.40.50.261">
    <property type="entry name" value="Succinyl-CoA synthetase domains"/>
    <property type="match status" value="1"/>
</dbReference>
<dbReference type="HAMAP" id="MF_00558">
    <property type="entry name" value="Succ_CoA_beta"/>
    <property type="match status" value="1"/>
</dbReference>
<dbReference type="InterPro" id="IPR011761">
    <property type="entry name" value="ATP-grasp"/>
</dbReference>
<dbReference type="InterPro" id="IPR013650">
    <property type="entry name" value="ATP-grasp_succ-CoA_synth-type"/>
</dbReference>
<dbReference type="InterPro" id="IPR013815">
    <property type="entry name" value="ATP_grasp_subdomain_1"/>
</dbReference>
<dbReference type="InterPro" id="IPR017866">
    <property type="entry name" value="Succ-CoA_synthase_bsu_CS"/>
</dbReference>
<dbReference type="InterPro" id="IPR005811">
    <property type="entry name" value="SUCC_ACL_C"/>
</dbReference>
<dbReference type="InterPro" id="IPR005809">
    <property type="entry name" value="Succ_CoA_ligase-like_bsu"/>
</dbReference>
<dbReference type="InterPro" id="IPR016102">
    <property type="entry name" value="Succinyl-CoA_synth-like"/>
</dbReference>
<dbReference type="NCBIfam" id="NF001913">
    <property type="entry name" value="PRK00696.1"/>
    <property type="match status" value="1"/>
</dbReference>
<dbReference type="NCBIfam" id="TIGR01016">
    <property type="entry name" value="sucCoAbeta"/>
    <property type="match status" value="1"/>
</dbReference>
<dbReference type="PANTHER" id="PTHR11815:SF10">
    <property type="entry name" value="SUCCINATE--COA LIGASE [GDP-FORMING] SUBUNIT BETA, MITOCHONDRIAL"/>
    <property type="match status" value="1"/>
</dbReference>
<dbReference type="PANTHER" id="PTHR11815">
    <property type="entry name" value="SUCCINYL-COA SYNTHETASE BETA CHAIN"/>
    <property type="match status" value="1"/>
</dbReference>
<dbReference type="Pfam" id="PF08442">
    <property type="entry name" value="ATP-grasp_2"/>
    <property type="match status" value="1"/>
</dbReference>
<dbReference type="Pfam" id="PF00549">
    <property type="entry name" value="Ligase_CoA"/>
    <property type="match status" value="1"/>
</dbReference>
<dbReference type="PIRSF" id="PIRSF001554">
    <property type="entry name" value="SucCS_beta"/>
    <property type="match status" value="1"/>
</dbReference>
<dbReference type="SUPFAM" id="SSF56059">
    <property type="entry name" value="Glutathione synthetase ATP-binding domain-like"/>
    <property type="match status" value="1"/>
</dbReference>
<dbReference type="SUPFAM" id="SSF52210">
    <property type="entry name" value="Succinyl-CoA synthetase domains"/>
    <property type="match status" value="1"/>
</dbReference>
<dbReference type="PROSITE" id="PS50975">
    <property type="entry name" value="ATP_GRASP"/>
    <property type="match status" value="1"/>
</dbReference>
<dbReference type="PROSITE" id="PS01217">
    <property type="entry name" value="SUCCINYL_COA_LIG_3"/>
    <property type="match status" value="1"/>
</dbReference>
<organism>
    <name type="scientific">Xanthomonas oryzae pv. oryzae (strain PXO99A)</name>
    <dbReference type="NCBI Taxonomy" id="360094"/>
    <lineage>
        <taxon>Bacteria</taxon>
        <taxon>Pseudomonadati</taxon>
        <taxon>Pseudomonadota</taxon>
        <taxon>Gammaproteobacteria</taxon>
        <taxon>Lysobacterales</taxon>
        <taxon>Lysobacteraceae</taxon>
        <taxon>Xanthomonas</taxon>
    </lineage>
</organism>
<protein>
    <recommendedName>
        <fullName evidence="1">Succinate--CoA ligase [ADP-forming] subunit beta</fullName>
        <ecNumber evidence="1">6.2.1.5</ecNumber>
    </recommendedName>
    <alternativeName>
        <fullName evidence="1">Succinyl-CoA synthetase subunit beta</fullName>
        <shortName evidence="1">SCS-beta</shortName>
    </alternativeName>
</protein>
<reference key="1">
    <citation type="journal article" date="2008" name="BMC Genomics">
        <title>Genome sequence and rapid evolution of the rice pathogen Xanthomonas oryzae pv. oryzae PXO99A.</title>
        <authorList>
            <person name="Salzberg S.L."/>
            <person name="Sommer D.D."/>
            <person name="Schatz M.C."/>
            <person name="Phillippy A.M."/>
            <person name="Rabinowicz P.D."/>
            <person name="Tsuge S."/>
            <person name="Furutani A."/>
            <person name="Ochiai H."/>
            <person name="Delcher A.L."/>
            <person name="Kelley D."/>
            <person name="Madupu R."/>
            <person name="Puiu D."/>
            <person name="Radune D."/>
            <person name="Shumway M."/>
            <person name="Trapnell C."/>
            <person name="Aparna G."/>
            <person name="Jha G."/>
            <person name="Pandey A."/>
            <person name="Patil P.B."/>
            <person name="Ishihara H."/>
            <person name="Meyer D.F."/>
            <person name="Szurek B."/>
            <person name="Verdier V."/>
            <person name="Koebnik R."/>
            <person name="Dow J.M."/>
            <person name="Ryan R.P."/>
            <person name="Hirata H."/>
            <person name="Tsuyumu S."/>
            <person name="Won Lee S."/>
            <person name="Seo Y.-S."/>
            <person name="Sriariyanum M."/>
            <person name="Ronald P.C."/>
            <person name="Sonti R.V."/>
            <person name="Van Sluys M.-A."/>
            <person name="Leach J.E."/>
            <person name="White F.F."/>
            <person name="Bogdanove A.J."/>
        </authorList>
    </citation>
    <scope>NUCLEOTIDE SEQUENCE [LARGE SCALE GENOMIC DNA]</scope>
    <source>
        <strain>PXO99A</strain>
    </source>
</reference>
<evidence type="ECO:0000255" key="1">
    <source>
        <dbReference type="HAMAP-Rule" id="MF_00558"/>
    </source>
</evidence>
<name>SUCC_XANOP</name>
<keyword id="KW-0067">ATP-binding</keyword>
<keyword id="KW-0436">Ligase</keyword>
<keyword id="KW-0460">Magnesium</keyword>
<keyword id="KW-0479">Metal-binding</keyword>
<keyword id="KW-0547">Nucleotide-binding</keyword>
<keyword id="KW-0816">Tricarboxylic acid cycle</keyword>